<gene>
    <name evidence="1" type="primary">uvrC</name>
    <name type="ordered locus">CLI_3564</name>
</gene>
<evidence type="ECO:0000255" key="1">
    <source>
        <dbReference type="HAMAP-Rule" id="MF_00203"/>
    </source>
</evidence>
<keyword id="KW-0963">Cytoplasm</keyword>
<keyword id="KW-0227">DNA damage</keyword>
<keyword id="KW-0228">DNA excision</keyword>
<keyword id="KW-0234">DNA repair</keyword>
<keyword id="KW-0267">Excision nuclease</keyword>
<keyword id="KW-0742">SOS response</keyword>
<sequence length="618" mass="71669">MFDLEYQLKNLPDKPGVYLMKNNLGEIIYVGKAKILKNRVRQYFQKSQKHSEKVKAMVKNIEEFEYIITDSEIEALILECNLIKKYRPKYNILLKDDKHYPFIKVTLAEDFPRVVSTRKVTKDGSKYFGPYVDGSSVKDIIELIKKTFPIRTCKKNIVEGAKAIRPCLNYQIGLCKAPCAQYIKKSEYREIIDDVIKLLSGKHLDIVENFKLNMERAAENLEFEKAAMLRDKINIIEKIGEKQKIILNNFDNEDYISLYSDGKDTCFQVFFLRNGKIVGREHFIIEDTFDTNSSTLISNFLKEFYGGTAYIPKTIYVPNIEDEALLEQWLTLKKESKSTIKIPIKGEKKNILVLVEKNAKTTLENFKLKYLQEKALYDNVLKDLKNILRLQEEPIRIEAFDISNIQGFDSVGSMVVFEKGRAKPSDYRRFKINTVKGADDYKSMKEILTRRFQHGLSEIKSIQDRKLEFSSGKFSVFPDLILMDGGKGQINIALEVLNTFNIDIPVCGMVKDNKHRTRGLIYNGEEIIINKYGSVMKFITRVQDEVHRFAISYHRSLRGKNSFHSLLDDIPNIGEKRKKDLLFNFKSIDNIKKATYEELLSIPSMDKKSAECVLEFFK</sequence>
<accession>A7GIX6</accession>
<dbReference type="EMBL" id="CP000728">
    <property type="protein sequence ID" value="ABS39516.1"/>
    <property type="molecule type" value="Genomic_DNA"/>
</dbReference>
<dbReference type="RefSeq" id="WP_012101082.1">
    <property type="nucleotide sequence ID" value="NC_009699.1"/>
</dbReference>
<dbReference type="SMR" id="A7GIX6"/>
<dbReference type="KEGG" id="cbf:CLI_3564"/>
<dbReference type="HOGENOM" id="CLU_014841_3_2_9"/>
<dbReference type="Proteomes" id="UP000002410">
    <property type="component" value="Chromosome"/>
</dbReference>
<dbReference type="GO" id="GO:0005737">
    <property type="term" value="C:cytoplasm"/>
    <property type="evidence" value="ECO:0007669"/>
    <property type="project" value="UniProtKB-SubCell"/>
</dbReference>
<dbReference type="GO" id="GO:0009380">
    <property type="term" value="C:excinuclease repair complex"/>
    <property type="evidence" value="ECO:0007669"/>
    <property type="project" value="InterPro"/>
</dbReference>
<dbReference type="GO" id="GO:0003677">
    <property type="term" value="F:DNA binding"/>
    <property type="evidence" value="ECO:0007669"/>
    <property type="project" value="UniProtKB-UniRule"/>
</dbReference>
<dbReference type="GO" id="GO:0009381">
    <property type="term" value="F:excinuclease ABC activity"/>
    <property type="evidence" value="ECO:0007669"/>
    <property type="project" value="UniProtKB-UniRule"/>
</dbReference>
<dbReference type="GO" id="GO:0006289">
    <property type="term" value="P:nucleotide-excision repair"/>
    <property type="evidence" value="ECO:0007669"/>
    <property type="project" value="UniProtKB-UniRule"/>
</dbReference>
<dbReference type="GO" id="GO:0009432">
    <property type="term" value="P:SOS response"/>
    <property type="evidence" value="ECO:0007669"/>
    <property type="project" value="UniProtKB-UniRule"/>
</dbReference>
<dbReference type="CDD" id="cd10434">
    <property type="entry name" value="GIY-YIG_UvrC_Cho"/>
    <property type="match status" value="1"/>
</dbReference>
<dbReference type="FunFam" id="3.40.1440.10:FF:000001">
    <property type="entry name" value="UvrABC system protein C"/>
    <property type="match status" value="1"/>
</dbReference>
<dbReference type="Gene3D" id="1.10.150.20">
    <property type="entry name" value="5' to 3' exonuclease, C-terminal subdomain"/>
    <property type="match status" value="1"/>
</dbReference>
<dbReference type="Gene3D" id="3.40.1440.10">
    <property type="entry name" value="GIY-YIG endonuclease"/>
    <property type="match status" value="1"/>
</dbReference>
<dbReference type="Gene3D" id="4.10.860.10">
    <property type="entry name" value="UVR domain"/>
    <property type="match status" value="1"/>
</dbReference>
<dbReference type="Gene3D" id="3.30.420.340">
    <property type="entry name" value="UvrC, RNAse H endonuclease domain"/>
    <property type="match status" value="1"/>
</dbReference>
<dbReference type="HAMAP" id="MF_00203">
    <property type="entry name" value="UvrC"/>
    <property type="match status" value="1"/>
</dbReference>
<dbReference type="InterPro" id="IPR041663">
    <property type="entry name" value="DisA/LigA_HHH"/>
</dbReference>
<dbReference type="InterPro" id="IPR000305">
    <property type="entry name" value="GIY-YIG_endonuc"/>
</dbReference>
<dbReference type="InterPro" id="IPR035901">
    <property type="entry name" value="GIY-YIG_endonuc_sf"/>
</dbReference>
<dbReference type="InterPro" id="IPR047296">
    <property type="entry name" value="GIY-YIG_UvrC_Cho"/>
</dbReference>
<dbReference type="InterPro" id="IPR010994">
    <property type="entry name" value="RuvA_2-like"/>
</dbReference>
<dbReference type="InterPro" id="IPR001943">
    <property type="entry name" value="UVR_dom"/>
</dbReference>
<dbReference type="InterPro" id="IPR036876">
    <property type="entry name" value="UVR_dom_sf"/>
</dbReference>
<dbReference type="InterPro" id="IPR050066">
    <property type="entry name" value="UvrABC_protein_C"/>
</dbReference>
<dbReference type="InterPro" id="IPR004791">
    <property type="entry name" value="UvrC"/>
</dbReference>
<dbReference type="InterPro" id="IPR001162">
    <property type="entry name" value="UvrC_RNase_H_dom"/>
</dbReference>
<dbReference type="InterPro" id="IPR038476">
    <property type="entry name" value="UvrC_RNase_H_dom_sf"/>
</dbReference>
<dbReference type="NCBIfam" id="NF001824">
    <property type="entry name" value="PRK00558.1-5"/>
    <property type="match status" value="1"/>
</dbReference>
<dbReference type="NCBIfam" id="TIGR00194">
    <property type="entry name" value="uvrC"/>
    <property type="match status" value="1"/>
</dbReference>
<dbReference type="PANTHER" id="PTHR30562:SF1">
    <property type="entry name" value="UVRABC SYSTEM PROTEIN C"/>
    <property type="match status" value="1"/>
</dbReference>
<dbReference type="PANTHER" id="PTHR30562">
    <property type="entry name" value="UVRC/OXIDOREDUCTASE"/>
    <property type="match status" value="1"/>
</dbReference>
<dbReference type="Pfam" id="PF01541">
    <property type="entry name" value="GIY-YIG"/>
    <property type="match status" value="1"/>
</dbReference>
<dbReference type="Pfam" id="PF12826">
    <property type="entry name" value="HHH_2"/>
    <property type="match status" value="1"/>
</dbReference>
<dbReference type="Pfam" id="PF02151">
    <property type="entry name" value="UVR"/>
    <property type="match status" value="1"/>
</dbReference>
<dbReference type="Pfam" id="PF22920">
    <property type="entry name" value="UvrC_RNaseH"/>
    <property type="match status" value="1"/>
</dbReference>
<dbReference type="Pfam" id="PF08459">
    <property type="entry name" value="UvrC_RNaseH_dom"/>
    <property type="match status" value="1"/>
</dbReference>
<dbReference type="SMART" id="SM00465">
    <property type="entry name" value="GIYc"/>
    <property type="match status" value="1"/>
</dbReference>
<dbReference type="SUPFAM" id="SSF46600">
    <property type="entry name" value="C-terminal UvrC-binding domain of UvrB"/>
    <property type="match status" value="1"/>
</dbReference>
<dbReference type="SUPFAM" id="SSF82771">
    <property type="entry name" value="GIY-YIG endonuclease"/>
    <property type="match status" value="1"/>
</dbReference>
<dbReference type="SUPFAM" id="SSF47781">
    <property type="entry name" value="RuvA domain 2-like"/>
    <property type="match status" value="1"/>
</dbReference>
<dbReference type="PROSITE" id="PS50164">
    <property type="entry name" value="GIY_YIG"/>
    <property type="match status" value="1"/>
</dbReference>
<dbReference type="PROSITE" id="PS50151">
    <property type="entry name" value="UVR"/>
    <property type="match status" value="1"/>
</dbReference>
<dbReference type="PROSITE" id="PS50165">
    <property type="entry name" value="UVRC"/>
    <property type="match status" value="1"/>
</dbReference>
<proteinExistence type="inferred from homology"/>
<feature type="chain" id="PRO_1000077771" description="UvrABC system protein C">
    <location>
        <begin position="1"/>
        <end position="618"/>
    </location>
</feature>
<feature type="domain" description="GIY-YIG" evidence="1">
    <location>
        <begin position="13"/>
        <end position="92"/>
    </location>
</feature>
<feature type="domain" description="UVR" evidence="1">
    <location>
        <begin position="204"/>
        <end position="239"/>
    </location>
</feature>
<reference key="1">
    <citation type="submission" date="2007-06" db="EMBL/GenBank/DDBJ databases">
        <authorList>
            <person name="Brinkac L.M."/>
            <person name="Daugherty S."/>
            <person name="Dodson R.J."/>
            <person name="Madupu R."/>
            <person name="Brown J.L."/>
            <person name="Bruce D."/>
            <person name="Detter C."/>
            <person name="Munk C."/>
            <person name="Smith L.A."/>
            <person name="Smith T.J."/>
            <person name="White O."/>
            <person name="Brettin T.S."/>
        </authorList>
    </citation>
    <scope>NUCLEOTIDE SEQUENCE [LARGE SCALE GENOMIC DNA]</scope>
    <source>
        <strain>Langeland / NCTC 10281 / Type F</strain>
    </source>
</reference>
<protein>
    <recommendedName>
        <fullName evidence="1">UvrABC system protein C</fullName>
        <shortName evidence="1">Protein UvrC</shortName>
    </recommendedName>
    <alternativeName>
        <fullName evidence="1">Excinuclease ABC subunit C</fullName>
    </alternativeName>
</protein>
<organism>
    <name type="scientific">Clostridium botulinum (strain Langeland / NCTC 10281 / Type F)</name>
    <dbReference type="NCBI Taxonomy" id="441772"/>
    <lineage>
        <taxon>Bacteria</taxon>
        <taxon>Bacillati</taxon>
        <taxon>Bacillota</taxon>
        <taxon>Clostridia</taxon>
        <taxon>Eubacteriales</taxon>
        <taxon>Clostridiaceae</taxon>
        <taxon>Clostridium</taxon>
    </lineage>
</organism>
<name>UVRC_CLOBL</name>
<comment type="function">
    <text evidence="1">The UvrABC repair system catalyzes the recognition and processing of DNA lesions. UvrC both incises the 5' and 3' sides of the lesion. The N-terminal half is responsible for the 3' incision and the C-terminal half is responsible for the 5' incision.</text>
</comment>
<comment type="subunit">
    <text evidence="1">Interacts with UvrB in an incision complex.</text>
</comment>
<comment type="subcellular location">
    <subcellularLocation>
        <location evidence="1">Cytoplasm</location>
    </subcellularLocation>
</comment>
<comment type="similarity">
    <text evidence="1">Belongs to the UvrC family.</text>
</comment>